<evidence type="ECO:0000250" key="1"/>
<evidence type="ECO:0000255" key="2"/>
<evidence type="ECO:0000256" key="3">
    <source>
        <dbReference type="SAM" id="MobiDB-lite"/>
    </source>
</evidence>
<evidence type="ECO:0000305" key="4"/>
<sequence>MGYSSSSRIGLCLFLFFTFALLSSARISLSFSENEMTVVPERSLMVSTNDYSDPTANGRHDPPRGGRGRRR</sequence>
<keyword id="KW-0325">Glycoprotein</keyword>
<keyword id="KW-0339">Growth factor</keyword>
<keyword id="KW-0379">Hydroxylation</keyword>
<keyword id="KW-1185">Reference proteome</keyword>
<keyword id="KW-0964">Secreted</keyword>
<keyword id="KW-0732">Signal</keyword>
<keyword id="KW-0765">Sulfation</keyword>
<organism>
    <name type="scientific">Arabidopsis thaliana</name>
    <name type="common">Mouse-ear cress</name>
    <dbReference type="NCBI Taxonomy" id="3702"/>
    <lineage>
        <taxon>Eukaryota</taxon>
        <taxon>Viridiplantae</taxon>
        <taxon>Streptophyta</taxon>
        <taxon>Embryophyta</taxon>
        <taxon>Tracheophyta</taxon>
        <taxon>Spermatophyta</taxon>
        <taxon>Magnoliopsida</taxon>
        <taxon>eudicotyledons</taxon>
        <taxon>Gunneridae</taxon>
        <taxon>Pentapetalae</taxon>
        <taxon>rosids</taxon>
        <taxon>malvids</taxon>
        <taxon>Brassicales</taxon>
        <taxon>Brassicaceae</taxon>
        <taxon>Camelineae</taxon>
        <taxon>Arabidopsis</taxon>
    </lineage>
</organism>
<comment type="function">
    <text evidence="1">Promotes cellular proliferation and expansion.</text>
</comment>
<comment type="subcellular location">
    <subcellularLocation>
        <location evidence="1">Secreted</location>
    </subcellularLocation>
</comment>
<comment type="PTM">
    <text evidence="1">The sulfation and the glycosylation are required for full activity.</text>
</comment>
<comment type="similarity">
    <text evidence="4">Belongs to the sulfated-peptide plant hormone family.</text>
</comment>
<reference key="1">
    <citation type="journal article" date="1999" name="Nature">
        <title>Sequence and analysis of chromosome 2 of the plant Arabidopsis thaliana.</title>
        <authorList>
            <person name="Lin X."/>
            <person name="Kaul S."/>
            <person name="Rounsley S.D."/>
            <person name="Shea T.P."/>
            <person name="Benito M.-I."/>
            <person name="Town C.D."/>
            <person name="Fujii C.Y."/>
            <person name="Mason T.M."/>
            <person name="Bowman C.L."/>
            <person name="Barnstead M.E."/>
            <person name="Feldblyum T.V."/>
            <person name="Buell C.R."/>
            <person name="Ketchum K.A."/>
            <person name="Lee J.J."/>
            <person name="Ronning C.M."/>
            <person name="Koo H.L."/>
            <person name="Moffat K.S."/>
            <person name="Cronin L.A."/>
            <person name="Shen M."/>
            <person name="Pai G."/>
            <person name="Van Aken S."/>
            <person name="Umayam L."/>
            <person name="Tallon L.J."/>
            <person name="Gill J.E."/>
            <person name="Adams M.D."/>
            <person name="Carrera A.J."/>
            <person name="Creasy T.H."/>
            <person name="Goodman H.M."/>
            <person name="Somerville C.R."/>
            <person name="Copenhaver G.P."/>
            <person name="Preuss D."/>
            <person name="Nierman W.C."/>
            <person name="White O."/>
            <person name="Eisen J.A."/>
            <person name="Salzberg S.L."/>
            <person name="Fraser C.M."/>
            <person name="Venter J.C."/>
        </authorList>
    </citation>
    <scope>NUCLEOTIDE SEQUENCE [LARGE SCALE GENOMIC DNA]</scope>
    <source>
        <strain>cv. Columbia</strain>
    </source>
</reference>
<reference key="2">
    <citation type="journal article" date="2017" name="Plant J.">
        <title>Araport11: a complete reannotation of the Arabidopsis thaliana reference genome.</title>
        <authorList>
            <person name="Cheng C.Y."/>
            <person name="Krishnakumar V."/>
            <person name="Chan A.P."/>
            <person name="Thibaud-Nissen F."/>
            <person name="Schobel S."/>
            <person name="Town C.D."/>
        </authorList>
    </citation>
    <scope>GENOME REANNOTATION</scope>
    <source>
        <strain>cv. Columbia</strain>
    </source>
</reference>
<reference key="3">
    <citation type="submission" date="2006-02" db="EMBL/GenBank/DDBJ databases">
        <title>Arabidopsis ORF clones.</title>
        <authorList>
            <person name="Shinn P."/>
            <person name="Chen H."/>
            <person name="Kim C.J."/>
            <person name="Ecker J.R."/>
        </authorList>
    </citation>
    <scope>NUCLEOTIDE SEQUENCE [LARGE SCALE MRNA]</scope>
    <source>
        <strain>cv. Columbia</strain>
    </source>
</reference>
<reference key="4">
    <citation type="submission" date="2002-03" db="EMBL/GenBank/DDBJ databases">
        <title>Full-length cDNA from Arabidopsis thaliana.</title>
        <authorList>
            <person name="Brover V.V."/>
            <person name="Troukhan M.E."/>
            <person name="Alexandrov N.A."/>
            <person name="Lu Y.-P."/>
            <person name="Flavell R.B."/>
            <person name="Feldmann K.A."/>
        </authorList>
    </citation>
    <scope>NUCLEOTIDE SEQUENCE [LARGE SCALE MRNA]</scope>
</reference>
<reference key="5">
    <citation type="journal article" date="2007" name="Proc. Natl. Acad. Sci. U.S.A.">
        <title>Tyrosine-sulfated glycopeptide involved in cellular proliferation and expansion in Arabidopsis.</title>
        <authorList>
            <person name="Amano Y."/>
            <person name="Tsubouchi H."/>
            <person name="Shinohara H."/>
            <person name="Ogawa M."/>
            <person name="Matsubayashi Y."/>
        </authorList>
    </citation>
    <scope>IDENTIFICATION</scope>
    <source>
        <strain>cv. Columbia</strain>
    </source>
</reference>
<proteinExistence type="inferred from homology"/>
<protein>
    <recommendedName>
        <fullName>Protein PSY3</fullName>
    </recommendedName>
    <component>
        <recommendedName>
            <fullName>Tyrosine-sulfated glycopeptide 3</fullName>
        </recommendedName>
    </component>
</protein>
<feature type="signal peptide" evidence="2">
    <location>
        <begin position="1"/>
        <end position="25"/>
    </location>
</feature>
<feature type="propeptide" id="PRO_0000365615" evidence="2">
    <location>
        <begin position="26"/>
        <end position="49"/>
    </location>
</feature>
<feature type="peptide" id="PRO_0000365616" description="Tyrosine-sulfated glycopeptide 3">
    <location>
        <begin position="50"/>
        <end position="65"/>
    </location>
</feature>
<feature type="propeptide" id="PRO_0000365617" evidence="2">
    <location>
        <begin position="66"/>
        <end position="71"/>
    </location>
</feature>
<feature type="region of interest" description="Disordered" evidence="3">
    <location>
        <begin position="47"/>
        <end position="71"/>
    </location>
</feature>
<feature type="modified residue" description="Sulfotyrosine" evidence="1">
    <location>
        <position position="51"/>
    </location>
</feature>
<feature type="modified residue" description="4-hydroxyproline" evidence="1">
    <location>
        <position position="63"/>
    </location>
</feature>
<feature type="glycosylation site" description="O-linked (Ara...) hydroxyproline" evidence="1">
    <location>
        <position position="63"/>
    </location>
</feature>
<gene>
    <name type="primary">PSY3</name>
    <name type="ordered locus">At2g29995</name>
    <name type="ORF">F23F1.2</name>
</gene>
<dbReference type="EMBL" id="AC004680">
    <property type="protein sequence ID" value="AAM14985.1"/>
    <property type="molecule type" value="Genomic_DNA"/>
</dbReference>
<dbReference type="EMBL" id="CP002685">
    <property type="protein sequence ID" value="AEC08333.1"/>
    <property type="molecule type" value="Genomic_DNA"/>
</dbReference>
<dbReference type="EMBL" id="AY085021">
    <property type="protein sequence ID" value="AAM61579.1"/>
    <property type="molecule type" value="mRNA"/>
</dbReference>
<dbReference type="EMBL" id="BT024520">
    <property type="protein sequence ID" value="ABD38859.1"/>
    <property type="molecule type" value="mRNA"/>
</dbReference>
<dbReference type="RefSeq" id="NP_565690.1">
    <property type="nucleotide sequence ID" value="NM_128554.3"/>
</dbReference>
<dbReference type="STRING" id="3702.Q8S8P7"/>
<dbReference type="GlyCosmos" id="Q8S8P7">
    <property type="glycosylation" value="1 site, No reported glycans"/>
</dbReference>
<dbReference type="PaxDb" id="3702-AT2G29995.1"/>
<dbReference type="EnsemblPlants" id="AT2G29995.1">
    <property type="protein sequence ID" value="AT2G29995.1"/>
    <property type="gene ID" value="AT2G29995"/>
</dbReference>
<dbReference type="GeneID" id="817550"/>
<dbReference type="Gramene" id="AT2G29995.1">
    <property type="protein sequence ID" value="AT2G29995.1"/>
    <property type="gene ID" value="AT2G29995"/>
</dbReference>
<dbReference type="KEGG" id="ath:AT2G29995"/>
<dbReference type="Araport" id="AT2G29995"/>
<dbReference type="TAIR" id="AT2G29995"/>
<dbReference type="eggNOG" id="ENOG502SEJX">
    <property type="taxonomic scope" value="Eukaryota"/>
</dbReference>
<dbReference type="HOGENOM" id="CLU_197080_0_0_1"/>
<dbReference type="InParanoid" id="Q8S8P7"/>
<dbReference type="OMA" id="FKAKLCF"/>
<dbReference type="OrthoDB" id="1877702at2759"/>
<dbReference type="PhylomeDB" id="Q8S8P7"/>
<dbReference type="PRO" id="PR:Q8S8P7"/>
<dbReference type="Proteomes" id="UP000006548">
    <property type="component" value="Chromosome 2"/>
</dbReference>
<dbReference type="ExpressionAtlas" id="Q8S8P7">
    <property type="expression patterns" value="baseline and differential"/>
</dbReference>
<dbReference type="GO" id="GO:0005576">
    <property type="term" value="C:extracellular region"/>
    <property type="evidence" value="ECO:0007669"/>
    <property type="project" value="UniProtKB-SubCell"/>
</dbReference>
<dbReference type="GO" id="GO:0008083">
    <property type="term" value="F:growth factor activity"/>
    <property type="evidence" value="ECO:0007669"/>
    <property type="project" value="UniProtKB-KW"/>
</dbReference>
<dbReference type="InterPro" id="IPR034430">
    <property type="entry name" value="PSY"/>
</dbReference>
<dbReference type="PANTHER" id="PTHR37177">
    <property type="entry name" value="PROTEIN PSY1"/>
    <property type="match status" value="1"/>
</dbReference>
<dbReference type="PANTHER" id="PTHR37177:SF3">
    <property type="entry name" value="PROTEIN PSY3"/>
    <property type="match status" value="1"/>
</dbReference>
<name>PSY3_ARATH</name>
<accession>Q8S8P7</accession>